<gene>
    <name evidence="1" type="primary">glyS</name>
    <name type="ordered locus">MmarC5_1458</name>
</gene>
<name>SYG_METM5</name>
<keyword id="KW-0030">Aminoacyl-tRNA synthetase</keyword>
<keyword id="KW-0067">ATP-binding</keyword>
<keyword id="KW-0963">Cytoplasm</keyword>
<keyword id="KW-0436">Ligase</keyword>
<keyword id="KW-0547">Nucleotide-binding</keyword>
<keyword id="KW-0648">Protein biosynthesis</keyword>
<feature type="chain" id="PRO_1000047377" description="Glycine--tRNA ligase">
    <location>
        <begin position="1"/>
        <end position="575"/>
    </location>
</feature>
<feature type="binding site" evidence="1">
    <location>
        <position position="96"/>
    </location>
    <ligand>
        <name>substrate</name>
    </ligand>
</feature>
<feature type="binding site" evidence="1">
    <location>
        <position position="162"/>
    </location>
    <ligand>
        <name>substrate</name>
    </ligand>
</feature>
<feature type="binding site" evidence="1">
    <location>
        <begin position="194"/>
        <end position="196"/>
    </location>
    <ligand>
        <name>ATP</name>
        <dbReference type="ChEBI" id="CHEBI:30616"/>
    </ligand>
</feature>
<feature type="binding site" evidence="1">
    <location>
        <begin position="204"/>
        <end position="209"/>
    </location>
    <ligand>
        <name>ATP</name>
        <dbReference type="ChEBI" id="CHEBI:30616"/>
    </ligand>
</feature>
<feature type="binding site" evidence="1">
    <location>
        <begin position="209"/>
        <end position="213"/>
    </location>
    <ligand>
        <name>substrate</name>
    </ligand>
</feature>
<feature type="binding site" evidence="1">
    <location>
        <begin position="327"/>
        <end position="328"/>
    </location>
    <ligand>
        <name>ATP</name>
        <dbReference type="ChEBI" id="CHEBI:30616"/>
    </ligand>
</feature>
<feature type="binding site" evidence="1">
    <location>
        <begin position="446"/>
        <end position="450"/>
    </location>
    <ligand>
        <name>substrate</name>
    </ligand>
</feature>
<feature type="binding site" evidence="1">
    <location>
        <begin position="450"/>
        <end position="453"/>
    </location>
    <ligand>
        <name>ATP</name>
        <dbReference type="ChEBI" id="CHEBI:30616"/>
    </ligand>
</feature>
<evidence type="ECO:0000255" key="1">
    <source>
        <dbReference type="HAMAP-Rule" id="MF_00253"/>
    </source>
</evidence>
<protein>
    <recommendedName>
        <fullName evidence="1">Glycine--tRNA ligase</fullName>
        <ecNumber evidence="1">6.1.1.14</ecNumber>
    </recommendedName>
    <alternativeName>
        <fullName evidence="1">Glycyl-tRNA synthetase</fullName>
        <shortName evidence="1">GlyRS</shortName>
    </alternativeName>
</protein>
<sequence>MDKYDKIIDLTKRRGFLWNSFEIYGGIAGFFDYGPLGAILKNNVINTWRKHYIVNEGFYEIDSPTVTPYEVLKASGHVENFTDPLVECKSCLESFRADHIIEENVDVDTEGKTLQELQEMIEKNNIKCPKCGGEFKEVSTFNLMFATSIGPGGKRAAFMRPETAQGIFIQFKRISQFFRNKLPFGAVQIGKAYRNEISPRQGVIRLREFTQAEGEFFIDSRKKENFEKFESVKEIVLPLLSGKNQENESLSAEEKIVRMSLSDAVKNGIIAHEAIAYYIAVTKKFLMEIGIDESKLRFRQHLPNEMAHYAADCWDAELYTDRYGWIECVGIADRTNYDLLAHMKNSSEDLSVFVELDEDKEIEVYEIELNYKLVGRTFKGDSKVLEESLKELDDKKMEELVEALETEGKYVLSTCKRDFELLKEYLTAKKVKKTVKGEKIIPHVIEPSYGIDRITYCVMEHAFKEDEDRTVMGFSNAVSPIKVGVFPLVNKEGMPEIAMDLKNKLRENGLIAEYDDSGAIGRRYMRMDEVGTPFCVTIDGETLTDSSVTIRERDSREQFRIPINEVVPYIKDKLN</sequence>
<organism>
    <name type="scientific">Methanococcus maripaludis (strain C5 / ATCC BAA-1333)</name>
    <dbReference type="NCBI Taxonomy" id="402880"/>
    <lineage>
        <taxon>Archaea</taxon>
        <taxon>Methanobacteriati</taxon>
        <taxon>Methanobacteriota</taxon>
        <taxon>Methanomada group</taxon>
        <taxon>Methanococci</taxon>
        <taxon>Methanococcales</taxon>
        <taxon>Methanococcaceae</taxon>
        <taxon>Methanococcus</taxon>
    </lineage>
</organism>
<comment type="function">
    <text evidence="1">Catalyzes the attachment of glycine to tRNA(Gly).</text>
</comment>
<comment type="catalytic activity">
    <reaction evidence="1">
        <text>tRNA(Gly) + glycine + ATP = glycyl-tRNA(Gly) + AMP + diphosphate</text>
        <dbReference type="Rhea" id="RHEA:16013"/>
        <dbReference type="Rhea" id="RHEA-COMP:9664"/>
        <dbReference type="Rhea" id="RHEA-COMP:9683"/>
        <dbReference type="ChEBI" id="CHEBI:30616"/>
        <dbReference type="ChEBI" id="CHEBI:33019"/>
        <dbReference type="ChEBI" id="CHEBI:57305"/>
        <dbReference type="ChEBI" id="CHEBI:78442"/>
        <dbReference type="ChEBI" id="CHEBI:78522"/>
        <dbReference type="ChEBI" id="CHEBI:456215"/>
        <dbReference type="EC" id="6.1.1.14"/>
    </reaction>
</comment>
<comment type="subcellular location">
    <subcellularLocation>
        <location evidence="1">Cytoplasm</location>
    </subcellularLocation>
</comment>
<comment type="similarity">
    <text evidence="1">Belongs to the class-II aminoacyl-tRNA synthetase family.</text>
</comment>
<proteinExistence type="inferred from homology"/>
<dbReference type="EC" id="6.1.1.14" evidence="1"/>
<dbReference type="EMBL" id="CP000609">
    <property type="protein sequence ID" value="ABO35755.1"/>
    <property type="molecule type" value="Genomic_DNA"/>
</dbReference>
<dbReference type="RefSeq" id="WP_011869205.1">
    <property type="nucleotide sequence ID" value="NC_009135.1"/>
</dbReference>
<dbReference type="SMR" id="A4FZX1"/>
<dbReference type="STRING" id="402880.MmarC5_1458"/>
<dbReference type="GeneID" id="4927579"/>
<dbReference type="KEGG" id="mmq:MmarC5_1458"/>
<dbReference type="eggNOG" id="arCOG00405">
    <property type="taxonomic scope" value="Archaea"/>
</dbReference>
<dbReference type="HOGENOM" id="CLU_015515_1_2_2"/>
<dbReference type="OrthoDB" id="6113at2157"/>
<dbReference type="Proteomes" id="UP000000253">
    <property type="component" value="Chromosome"/>
</dbReference>
<dbReference type="GO" id="GO:0005737">
    <property type="term" value="C:cytoplasm"/>
    <property type="evidence" value="ECO:0007669"/>
    <property type="project" value="UniProtKB-SubCell"/>
</dbReference>
<dbReference type="GO" id="GO:0005524">
    <property type="term" value="F:ATP binding"/>
    <property type="evidence" value="ECO:0007669"/>
    <property type="project" value="UniProtKB-UniRule"/>
</dbReference>
<dbReference type="GO" id="GO:0004820">
    <property type="term" value="F:glycine-tRNA ligase activity"/>
    <property type="evidence" value="ECO:0000250"/>
    <property type="project" value="UniProtKB"/>
</dbReference>
<dbReference type="GO" id="GO:0046983">
    <property type="term" value="F:protein dimerization activity"/>
    <property type="evidence" value="ECO:0000250"/>
    <property type="project" value="UniProtKB"/>
</dbReference>
<dbReference type="GO" id="GO:0006426">
    <property type="term" value="P:glycyl-tRNA aminoacylation"/>
    <property type="evidence" value="ECO:0007669"/>
    <property type="project" value="UniProtKB-UniRule"/>
</dbReference>
<dbReference type="CDD" id="cd00774">
    <property type="entry name" value="GlyRS-like_core"/>
    <property type="match status" value="1"/>
</dbReference>
<dbReference type="CDD" id="cd00858">
    <property type="entry name" value="GlyRS_anticodon"/>
    <property type="match status" value="1"/>
</dbReference>
<dbReference type="FunFam" id="3.30.40.230:FF:000005">
    <property type="entry name" value="Glycine--tRNA ligase"/>
    <property type="match status" value="1"/>
</dbReference>
<dbReference type="FunFam" id="3.40.50.800:FF:000002">
    <property type="entry name" value="Glycine--tRNA ligase"/>
    <property type="match status" value="1"/>
</dbReference>
<dbReference type="FunFam" id="3.30.720.200:FF:000001">
    <property type="entry name" value="Glycine--tRNA ligase 2"/>
    <property type="match status" value="1"/>
</dbReference>
<dbReference type="Gene3D" id="3.30.40.230">
    <property type="match status" value="1"/>
</dbReference>
<dbReference type="Gene3D" id="3.30.720.200">
    <property type="match status" value="1"/>
</dbReference>
<dbReference type="Gene3D" id="3.40.50.800">
    <property type="entry name" value="Anticodon-binding domain"/>
    <property type="match status" value="1"/>
</dbReference>
<dbReference type="Gene3D" id="3.30.930.10">
    <property type="entry name" value="Bira Bifunctional Protein, Domain 2"/>
    <property type="match status" value="1"/>
</dbReference>
<dbReference type="HAMAP" id="MF_00253_A">
    <property type="entry name" value="Gly_tRNA_synth_A"/>
    <property type="match status" value="1"/>
</dbReference>
<dbReference type="InterPro" id="IPR002314">
    <property type="entry name" value="aa-tRNA-synt_IIb"/>
</dbReference>
<dbReference type="InterPro" id="IPR006195">
    <property type="entry name" value="aa-tRNA-synth_II"/>
</dbReference>
<dbReference type="InterPro" id="IPR045864">
    <property type="entry name" value="aa-tRNA-synth_II/BPL/LPL"/>
</dbReference>
<dbReference type="InterPro" id="IPR004154">
    <property type="entry name" value="Anticodon-bd"/>
</dbReference>
<dbReference type="InterPro" id="IPR036621">
    <property type="entry name" value="Anticodon-bd_dom_sf"/>
</dbReference>
<dbReference type="InterPro" id="IPR027031">
    <property type="entry name" value="Gly-tRNA_synthase/POLG2"/>
</dbReference>
<dbReference type="InterPro" id="IPR022960">
    <property type="entry name" value="Gly_tRNA_ligase_arc"/>
</dbReference>
<dbReference type="InterPro" id="IPR033731">
    <property type="entry name" value="GlyRS-like_core"/>
</dbReference>
<dbReference type="InterPro" id="IPR002315">
    <property type="entry name" value="tRNA-synt_gly"/>
</dbReference>
<dbReference type="NCBIfam" id="TIGR00389">
    <property type="entry name" value="glyS_dimeric"/>
    <property type="match status" value="1"/>
</dbReference>
<dbReference type="NCBIfam" id="NF003211">
    <property type="entry name" value="PRK04173.1"/>
    <property type="match status" value="1"/>
</dbReference>
<dbReference type="PANTHER" id="PTHR10745:SF0">
    <property type="entry name" value="GLYCINE--TRNA LIGASE"/>
    <property type="match status" value="1"/>
</dbReference>
<dbReference type="PANTHER" id="PTHR10745">
    <property type="entry name" value="GLYCYL-TRNA SYNTHETASE/DNA POLYMERASE SUBUNIT GAMMA-2"/>
    <property type="match status" value="1"/>
</dbReference>
<dbReference type="Pfam" id="PF03129">
    <property type="entry name" value="HGTP_anticodon"/>
    <property type="match status" value="1"/>
</dbReference>
<dbReference type="Pfam" id="PF00587">
    <property type="entry name" value="tRNA-synt_2b"/>
    <property type="match status" value="1"/>
</dbReference>
<dbReference type="PRINTS" id="PR01043">
    <property type="entry name" value="TRNASYNTHGLY"/>
</dbReference>
<dbReference type="SUPFAM" id="SSF52954">
    <property type="entry name" value="Class II aaRS ABD-related"/>
    <property type="match status" value="1"/>
</dbReference>
<dbReference type="SUPFAM" id="SSF55681">
    <property type="entry name" value="Class II aaRS and biotin synthetases"/>
    <property type="match status" value="1"/>
</dbReference>
<dbReference type="PROSITE" id="PS50862">
    <property type="entry name" value="AA_TRNA_LIGASE_II"/>
    <property type="match status" value="1"/>
</dbReference>
<reference key="1">
    <citation type="submission" date="2007-03" db="EMBL/GenBank/DDBJ databases">
        <title>Complete sequence of chromosome of Methanococcus maripaludis C5.</title>
        <authorList>
            <consortium name="US DOE Joint Genome Institute"/>
            <person name="Copeland A."/>
            <person name="Lucas S."/>
            <person name="Lapidus A."/>
            <person name="Barry K."/>
            <person name="Glavina del Rio T."/>
            <person name="Dalin E."/>
            <person name="Tice H."/>
            <person name="Pitluck S."/>
            <person name="Chertkov O."/>
            <person name="Brettin T."/>
            <person name="Bruce D."/>
            <person name="Han C."/>
            <person name="Detter J.C."/>
            <person name="Schmutz J."/>
            <person name="Larimer F."/>
            <person name="Land M."/>
            <person name="Hauser L."/>
            <person name="Kyrpides N."/>
            <person name="Mikhailova N."/>
            <person name="Sieprawska-Lupa M."/>
            <person name="Whitman W.B."/>
            <person name="Richardson P."/>
        </authorList>
    </citation>
    <scope>NUCLEOTIDE SEQUENCE [LARGE SCALE GENOMIC DNA]</scope>
    <source>
        <strain>C5 / ATCC BAA-1333</strain>
    </source>
</reference>
<accession>A4FZX1</accession>